<dbReference type="EC" id="3.5.1.108" evidence="1"/>
<dbReference type="EMBL" id="CP000911">
    <property type="protein sequence ID" value="ABY38513.1"/>
    <property type="molecule type" value="Genomic_DNA"/>
</dbReference>
<dbReference type="RefSeq" id="WP_002964532.1">
    <property type="nucleotide sequence ID" value="NC_010169.1"/>
</dbReference>
<dbReference type="SMR" id="B0CHL2"/>
<dbReference type="GeneID" id="97533370"/>
<dbReference type="KEGG" id="bmt:BSUIS_A1475"/>
<dbReference type="HOGENOM" id="CLU_046528_1_1_5"/>
<dbReference type="UniPathway" id="UPA00359">
    <property type="reaction ID" value="UER00478"/>
</dbReference>
<dbReference type="Proteomes" id="UP000008545">
    <property type="component" value="Chromosome I"/>
</dbReference>
<dbReference type="GO" id="GO:0016020">
    <property type="term" value="C:membrane"/>
    <property type="evidence" value="ECO:0007669"/>
    <property type="project" value="GOC"/>
</dbReference>
<dbReference type="GO" id="GO:0046872">
    <property type="term" value="F:metal ion binding"/>
    <property type="evidence" value="ECO:0007669"/>
    <property type="project" value="UniProtKB-KW"/>
</dbReference>
<dbReference type="GO" id="GO:0103117">
    <property type="term" value="F:UDP-3-O-acyl-N-acetylglucosamine deacetylase activity"/>
    <property type="evidence" value="ECO:0007669"/>
    <property type="project" value="UniProtKB-UniRule"/>
</dbReference>
<dbReference type="GO" id="GO:0009245">
    <property type="term" value="P:lipid A biosynthetic process"/>
    <property type="evidence" value="ECO:0007669"/>
    <property type="project" value="UniProtKB-UniRule"/>
</dbReference>
<dbReference type="Gene3D" id="3.30.230.20">
    <property type="entry name" value="lpxc deacetylase, domain 1"/>
    <property type="match status" value="1"/>
</dbReference>
<dbReference type="Gene3D" id="3.30.1700.10">
    <property type="entry name" value="lpxc deacetylase, domain 2"/>
    <property type="match status" value="1"/>
</dbReference>
<dbReference type="HAMAP" id="MF_00388">
    <property type="entry name" value="LpxC"/>
    <property type="match status" value="1"/>
</dbReference>
<dbReference type="InterPro" id="IPR020568">
    <property type="entry name" value="Ribosomal_Su5_D2-typ_SF"/>
</dbReference>
<dbReference type="InterPro" id="IPR004463">
    <property type="entry name" value="UDP-acyl_GlcNac_deAcase"/>
</dbReference>
<dbReference type="InterPro" id="IPR011334">
    <property type="entry name" value="UDP-acyl_GlcNac_deAcase_C"/>
</dbReference>
<dbReference type="InterPro" id="IPR015870">
    <property type="entry name" value="UDP-acyl_N-AcGlcN_deAcase_N"/>
</dbReference>
<dbReference type="NCBIfam" id="TIGR00325">
    <property type="entry name" value="lpxC"/>
    <property type="match status" value="1"/>
</dbReference>
<dbReference type="PANTHER" id="PTHR33694">
    <property type="entry name" value="UDP-3-O-ACYL-N-ACETYLGLUCOSAMINE DEACETYLASE 1, MITOCHONDRIAL-RELATED"/>
    <property type="match status" value="1"/>
</dbReference>
<dbReference type="PANTHER" id="PTHR33694:SF1">
    <property type="entry name" value="UDP-3-O-ACYL-N-ACETYLGLUCOSAMINE DEACETYLASE 1, MITOCHONDRIAL-RELATED"/>
    <property type="match status" value="1"/>
</dbReference>
<dbReference type="Pfam" id="PF03331">
    <property type="entry name" value="LpxC"/>
    <property type="match status" value="1"/>
</dbReference>
<dbReference type="SUPFAM" id="SSF54211">
    <property type="entry name" value="Ribosomal protein S5 domain 2-like"/>
    <property type="match status" value="2"/>
</dbReference>
<reference key="1">
    <citation type="submission" date="2007-12" db="EMBL/GenBank/DDBJ databases">
        <title>Brucella suis ATCC 23445 whole genome shotgun sequencing project.</title>
        <authorList>
            <person name="Setubal J.C."/>
            <person name="Bowns C."/>
            <person name="Boyle S."/>
            <person name="Crasta O.R."/>
            <person name="Czar M.J."/>
            <person name="Dharmanolla C."/>
            <person name="Gillespie J.J."/>
            <person name="Kenyon R.W."/>
            <person name="Lu J."/>
            <person name="Mane S."/>
            <person name="Mohapatra S."/>
            <person name="Nagrani S."/>
            <person name="Purkayastha A."/>
            <person name="Rajasimha H.K."/>
            <person name="Shallom J.M."/>
            <person name="Shallom S."/>
            <person name="Shukla M."/>
            <person name="Snyder E.E."/>
            <person name="Sobral B.W."/>
            <person name="Wattam A.R."/>
            <person name="Will R."/>
            <person name="Williams K."/>
            <person name="Yoo H."/>
            <person name="Bruce D."/>
            <person name="Detter C."/>
            <person name="Munk C."/>
            <person name="Brettin T.S."/>
        </authorList>
    </citation>
    <scope>NUCLEOTIDE SEQUENCE [LARGE SCALE GENOMIC DNA]</scope>
    <source>
        <strain>ATCC 23445 / NCTC 10510</strain>
    </source>
</reference>
<comment type="function">
    <text evidence="1">Catalyzes the hydrolysis of UDP-3-O-myristoyl-N-acetylglucosamine to form UDP-3-O-myristoylglucosamine and acetate, the committed step in lipid A biosynthesis.</text>
</comment>
<comment type="catalytic activity">
    <reaction evidence="1">
        <text>a UDP-3-O-[(3R)-3-hydroxyacyl]-N-acetyl-alpha-D-glucosamine + H2O = a UDP-3-O-[(3R)-3-hydroxyacyl]-alpha-D-glucosamine + acetate</text>
        <dbReference type="Rhea" id="RHEA:67816"/>
        <dbReference type="ChEBI" id="CHEBI:15377"/>
        <dbReference type="ChEBI" id="CHEBI:30089"/>
        <dbReference type="ChEBI" id="CHEBI:137740"/>
        <dbReference type="ChEBI" id="CHEBI:173225"/>
        <dbReference type="EC" id="3.5.1.108"/>
    </reaction>
</comment>
<comment type="cofactor">
    <cofactor evidence="1">
        <name>Zn(2+)</name>
        <dbReference type="ChEBI" id="CHEBI:29105"/>
    </cofactor>
</comment>
<comment type="pathway">
    <text evidence="1">Glycolipid biosynthesis; lipid IV(A) biosynthesis; lipid IV(A) from (3R)-3-hydroxytetradecanoyl-[acyl-carrier-protein] and UDP-N-acetyl-alpha-D-glucosamine: step 2/6.</text>
</comment>
<comment type="similarity">
    <text evidence="1">Belongs to the LpxC family.</text>
</comment>
<protein>
    <recommendedName>
        <fullName evidence="1">UDP-3-O-acyl-N-acetylglucosamine deacetylase</fullName>
        <shortName evidence="1">UDP-3-O-acyl-GlcNAc deacetylase</shortName>
        <ecNumber evidence="1">3.5.1.108</ecNumber>
    </recommendedName>
    <alternativeName>
        <fullName evidence="1">UDP-3-O-[R-3-hydroxymyristoyl]-N-acetylglucosamine deacetylase</fullName>
    </alternativeName>
</protein>
<sequence>MNAYQKTIGRAVTLSGVGVHGGAPASARLLPADADTGILFQRSDIKDSAPVCAHVSQIGATDLCTSLGAREARIDTVEHLMAAISALGIDNLVVEIEGPEVPILDGTSARFIEAVDSVGVVTQDAKRRFIRILKTVRVEAGNSWGEFRPYDGTRFEVEIDFECPLIGRQKFAHDVDEETFRKELSTARTFGFMKDVERLWAAGLALGASLDNSLVIGDDNSIVNADGLRFKDEFVRHKTLDAVGDLALAGLPFIGCFSSYRGGHRLNSEAVKALLSDETAFEIIEA</sequence>
<proteinExistence type="inferred from homology"/>
<accession>B0CHL2</accession>
<feature type="chain" id="PRO_1000122764" description="UDP-3-O-acyl-N-acetylglucosamine deacetylase">
    <location>
        <begin position="1"/>
        <end position="286"/>
    </location>
</feature>
<feature type="active site" description="Proton donor" evidence="1">
    <location>
        <position position="264"/>
    </location>
</feature>
<feature type="binding site" evidence="1">
    <location>
        <position position="79"/>
    </location>
    <ligand>
        <name>Zn(2+)</name>
        <dbReference type="ChEBI" id="CHEBI:29105"/>
    </ligand>
</feature>
<feature type="binding site" evidence="1">
    <location>
        <position position="237"/>
    </location>
    <ligand>
        <name>Zn(2+)</name>
        <dbReference type="ChEBI" id="CHEBI:29105"/>
    </ligand>
</feature>
<feature type="binding site" evidence="1">
    <location>
        <position position="241"/>
    </location>
    <ligand>
        <name>Zn(2+)</name>
        <dbReference type="ChEBI" id="CHEBI:29105"/>
    </ligand>
</feature>
<name>LPXC_BRUSI</name>
<organism>
    <name type="scientific">Brucella suis (strain ATCC 23445 / NCTC 10510)</name>
    <dbReference type="NCBI Taxonomy" id="470137"/>
    <lineage>
        <taxon>Bacteria</taxon>
        <taxon>Pseudomonadati</taxon>
        <taxon>Pseudomonadota</taxon>
        <taxon>Alphaproteobacteria</taxon>
        <taxon>Hyphomicrobiales</taxon>
        <taxon>Brucellaceae</taxon>
        <taxon>Brucella/Ochrobactrum group</taxon>
        <taxon>Brucella</taxon>
    </lineage>
</organism>
<gene>
    <name evidence="1" type="primary">lpxC</name>
    <name type="ordered locus">BSUIS_A1475</name>
</gene>
<keyword id="KW-0378">Hydrolase</keyword>
<keyword id="KW-0441">Lipid A biosynthesis</keyword>
<keyword id="KW-0444">Lipid biosynthesis</keyword>
<keyword id="KW-0443">Lipid metabolism</keyword>
<keyword id="KW-0479">Metal-binding</keyword>
<keyword id="KW-0862">Zinc</keyword>
<evidence type="ECO:0000255" key="1">
    <source>
        <dbReference type="HAMAP-Rule" id="MF_00388"/>
    </source>
</evidence>